<organism>
    <name type="scientific">Neosartorya fischeri (strain ATCC 1020 / DSM 3700 / CBS 544.65 / FGSC A1164 / JCM 1740 / NRRL 181 / WB 181)</name>
    <name type="common">Aspergillus fischerianus</name>
    <dbReference type="NCBI Taxonomy" id="331117"/>
    <lineage>
        <taxon>Eukaryota</taxon>
        <taxon>Fungi</taxon>
        <taxon>Dikarya</taxon>
        <taxon>Ascomycota</taxon>
        <taxon>Pezizomycotina</taxon>
        <taxon>Eurotiomycetes</taxon>
        <taxon>Eurotiomycetidae</taxon>
        <taxon>Eurotiales</taxon>
        <taxon>Aspergillaceae</taxon>
        <taxon>Aspergillus</taxon>
        <taxon>Aspergillus subgen. Fumigati</taxon>
    </lineage>
</organism>
<feature type="signal peptide" evidence="2">
    <location>
        <begin position="1"/>
        <end position="19"/>
    </location>
</feature>
<feature type="propeptide" id="PRO_0000393483" evidence="1">
    <location>
        <begin position="20"/>
        <end position="28"/>
    </location>
</feature>
<feature type="chain" id="PRO_0000393484" description="Probable acetylxylan esterase A">
    <location>
        <begin position="29"/>
        <end position="368"/>
    </location>
</feature>
<feature type="domain" description="CBM1" evidence="3">
    <location>
        <begin position="332"/>
        <end position="368"/>
    </location>
</feature>
<feature type="region of interest" description="Catalytic" evidence="1">
    <location>
        <begin position="32"/>
        <end position="304"/>
    </location>
</feature>
<feature type="region of interest" description="Ser/Thr-rich linker">
    <location>
        <begin position="305"/>
        <end position="333"/>
    </location>
</feature>
<feature type="region of interest" description="Disordered" evidence="4">
    <location>
        <begin position="306"/>
        <end position="330"/>
    </location>
</feature>
<feature type="compositionally biased region" description="Low complexity" evidence="4">
    <location>
        <begin position="307"/>
        <end position="330"/>
    </location>
</feature>
<feature type="active site" description="Charge relay system" evidence="1">
    <location>
        <position position="149"/>
    </location>
</feature>
<feature type="glycosylation site" description="N-linked (GlcNAc...) asparagine" evidence="2">
    <location>
        <position position="191"/>
    </location>
</feature>
<sequence length="368" mass="38975">MRALSVFFALFCFLALSSASPGQDVVKRVTSGSLQQVTNFGSNPSGTLMYIYVPKNLATKPGIVVAIHYCTGTAQAYYTGSPYAQLAEQYGFIVIYPQSPYSGTCWDVSSQSALTHNGGGDSNSIANMVTWTISQYNADTSKVFVTGSSSGAMMTNVMAATYPELFAAATVYSGVSAGCFYSSSNQVDAWNSSCAQGNVISTPEVWGGIAKAMYPGYTGPRPRMQIYHGSTDTTLYPQNYYETCKQWAGVFGYNYNSPQSTQSNTPQANYQTTIWGPNLQGIFATGVGHTVPIHGEQDMEWFGFAGGSSTTTTQPTTTSTTTSSGGSSTGTGVAAHWGQCGGNGWTGPTVCASGYTCTVVNAWYSQCL</sequence>
<reference key="1">
    <citation type="journal article" date="2008" name="PLoS Genet.">
        <title>Genomic islands in the pathogenic filamentous fungus Aspergillus fumigatus.</title>
        <authorList>
            <person name="Fedorova N.D."/>
            <person name="Khaldi N."/>
            <person name="Joardar V.S."/>
            <person name="Maiti R."/>
            <person name="Amedeo P."/>
            <person name="Anderson M.J."/>
            <person name="Crabtree J."/>
            <person name="Silva J.C."/>
            <person name="Badger J.H."/>
            <person name="Albarraq A."/>
            <person name="Angiuoli S."/>
            <person name="Bussey H."/>
            <person name="Bowyer P."/>
            <person name="Cotty P.J."/>
            <person name="Dyer P.S."/>
            <person name="Egan A."/>
            <person name="Galens K."/>
            <person name="Fraser-Liggett C.M."/>
            <person name="Haas B.J."/>
            <person name="Inman J.M."/>
            <person name="Kent R."/>
            <person name="Lemieux S."/>
            <person name="Malavazi I."/>
            <person name="Orvis J."/>
            <person name="Roemer T."/>
            <person name="Ronning C.M."/>
            <person name="Sundaram J.P."/>
            <person name="Sutton G."/>
            <person name="Turner G."/>
            <person name="Venter J.C."/>
            <person name="White O.R."/>
            <person name="Whitty B.R."/>
            <person name="Youngman P."/>
            <person name="Wolfe K.H."/>
            <person name="Goldman G.H."/>
            <person name="Wortman J.R."/>
            <person name="Jiang B."/>
            <person name="Denning D.W."/>
            <person name="Nierman W.C."/>
        </authorList>
    </citation>
    <scope>NUCLEOTIDE SEQUENCE [LARGE SCALE GENOMIC DNA]</scope>
    <source>
        <strain>ATCC 1020 / DSM 3700 / CBS 544.65 / FGSC A1164 / JCM 1740 / NRRL 181 / WB 181</strain>
    </source>
</reference>
<comment type="function">
    <text evidence="1">Acetylxylan esterase involved in the hydrolysis of xylan, a major structural heterogeneous polysaccharide found in plant biomass representing the second most abundant polysaccharide in the biosphere, after cellulose. Degrades acetylated xylans by cleaving acetyl side groups from the hetero-xylan backbone (By similarity).</text>
</comment>
<comment type="catalytic activity">
    <reaction>
        <text>Deacetylation of xylans and xylo-oligosaccharides.</text>
        <dbReference type="EC" id="3.1.1.72"/>
    </reaction>
</comment>
<comment type="pathway">
    <text>Glycan degradation; xylan degradation.</text>
</comment>
<comment type="subunit">
    <text evidence="1">Monomer.</text>
</comment>
<comment type="subcellular location">
    <subcellularLocation>
        <location evidence="1">Secreted</location>
    </subcellularLocation>
</comment>
<comment type="domain">
    <text>Has a modular structure: a carbohydrate esterase catalytic module at the N-terminus, a linker rich in serines and threonines, and a C-terminal carbohydrate-binding module (CBM). The genes for catalytic modules and CBMs seem to have evolved separately and have been linked by gene fusion.</text>
</comment>
<comment type="similarity">
    <text evidence="5">Belongs to the carbohydrate esterase 1 (CE1) family. AxeA subfamily.</text>
</comment>
<gene>
    <name type="primary">axeA</name>
    <name type="synonym">aceA</name>
    <name type="ORF">NFIA_099230</name>
</gene>
<proteinExistence type="inferred from homology"/>
<protein>
    <recommendedName>
        <fullName>Probable acetylxylan esterase A</fullName>
        <ecNumber>3.1.1.72</ecNumber>
    </recommendedName>
</protein>
<accession>A1DBP9</accession>
<dbReference type="EC" id="3.1.1.72"/>
<dbReference type="EMBL" id="DS027694">
    <property type="protein sequence ID" value="EAW20289.1"/>
    <property type="molecule type" value="Genomic_DNA"/>
</dbReference>
<dbReference type="RefSeq" id="XP_001262186.1">
    <property type="nucleotide sequence ID" value="XM_001262185.1"/>
</dbReference>
<dbReference type="SMR" id="A1DBP9"/>
<dbReference type="STRING" id="331117.A1DBP9"/>
<dbReference type="ESTHER" id="neofi-axe1">
    <property type="family name" value="Esterase_phb"/>
</dbReference>
<dbReference type="GlyCosmos" id="A1DBP9">
    <property type="glycosylation" value="1 site, No reported glycans"/>
</dbReference>
<dbReference type="EnsemblFungi" id="EAW20289">
    <property type="protein sequence ID" value="EAW20289"/>
    <property type="gene ID" value="NFIA_099230"/>
</dbReference>
<dbReference type="GeneID" id="4588439"/>
<dbReference type="KEGG" id="nfi:NFIA_099230"/>
<dbReference type="VEuPathDB" id="FungiDB:NFIA_099230"/>
<dbReference type="eggNOG" id="ENOG502QTDU">
    <property type="taxonomic scope" value="Eukaryota"/>
</dbReference>
<dbReference type="HOGENOM" id="CLU_027551_1_1_1"/>
<dbReference type="OMA" id="WGPNLQG"/>
<dbReference type="OrthoDB" id="2425929at2759"/>
<dbReference type="UniPathway" id="UPA00114"/>
<dbReference type="Proteomes" id="UP000006702">
    <property type="component" value="Unassembled WGS sequence"/>
</dbReference>
<dbReference type="GO" id="GO:0005576">
    <property type="term" value="C:extracellular region"/>
    <property type="evidence" value="ECO:0007669"/>
    <property type="project" value="UniProtKB-SubCell"/>
</dbReference>
<dbReference type="GO" id="GO:0046555">
    <property type="term" value="F:acetylxylan esterase activity"/>
    <property type="evidence" value="ECO:0007669"/>
    <property type="project" value="UniProtKB-EC"/>
</dbReference>
<dbReference type="GO" id="GO:0030248">
    <property type="term" value="F:cellulose binding"/>
    <property type="evidence" value="ECO:0007669"/>
    <property type="project" value="InterPro"/>
</dbReference>
<dbReference type="GO" id="GO:0030245">
    <property type="term" value="P:cellulose catabolic process"/>
    <property type="evidence" value="ECO:0007669"/>
    <property type="project" value="UniProtKB-KW"/>
</dbReference>
<dbReference type="GO" id="GO:0045493">
    <property type="term" value="P:xylan catabolic process"/>
    <property type="evidence" value="ECO:0007669"/>
    <property type="project" value="UniProtKB-UniPathway"/>
</dbReference>
<dbReference type="Gene3D" id="3.40.50.1820">
    <property type="entry name" value="alpha/beta hydrolase"/>
    <property type="match status" value="1"/>
</dbReference>
<dbReference type="InterPro" id="IPR029058">
    <property type="entry name" value="AB_hydrolase_fold"/>
</dbReference>
<dbReference type="InterPro" id="IPR000254">
    <property type="entry name" value="Cellulose-bd_dom_fun"/>
</dbReference>
<dbReference type="InterPro" id="IPR010126">
    <property type="entry name" value="Esterase_phb"/>
</dbReference>
<dbReference type="InterPro" id="IPR050955">
    <property type="entry name" value="Plant_Biomass_Hydrol_Est"/>
</dbReference>
<dbReference type="NCBIfam" id="TIGR01840">
    <property type="entry name" value="esterase_phb"/>
    <property type="match status" value="1"/>
</dbReference>
<dbReference type="PANTHER" id="PTHR43037:SF3">
    <property type="entry name" value="FERULOYL ESTERASE B"/>
    <property type="match status" value="1"/>
</dbReference>
<dbReference type="PANTHER" id="PTHR43037">
    <property type="entry name" value="UNNAMED PRODUCT-RELATED"/>
    <property type="match status" value="1"/>
</dbReference>
<dbReference type="Pfam" id="PF00734">
    <property type="entry name" value="CBM_1"/>
    <property type="match status" value="1"/>
</dbReference>
<dbReference type="Pfam" id="PF10503">
    <property type="entry name" value="Esterase_PHB"/>
    <property type="match status" value="1"/>
</dbReference>
<dbReference type="SMART" id="SM00236">
    <property type="entry name" value="fCBD"/>
    <property type="match status" value="1"/>
</dbReference>
<dbReference type="SUPFAM" id="SSF53474">
    <property type="entry name" value="alpha/beta-Hydrolases"/>
    <property type="match status" value="2"/>
</dbReference>
<dbReference type="PROSITE" id="PS00562">
    <property type="entry name" value="CBM1_1"/>
    <property type="match status" value="1"/>
</dbReference>
<dbReference type="PROSITE" id="PS51164">
    <property type="entry name" value="CBM1_2"/>
    <property type="match status" value="1"/>
</dbReference>
<name>AXE1_NEOFI</name>
<keyword id="KW-0119">Carbohydrate metabolism</keyword>
<keyword id="KW-0136">Cellulose degradation</keyword>
<keyword id="KW-0165">Cleavage on pair of basic residues</keyword>
<keyword id="KW-0325">Glycoprotein</keyword>
<keyword id="KW-0378">Hydrolase</keyword>
<keyword id="KW-0624">Polysaccharide degradation</keyword>
<keyword id="KW-1185">Reference proteome</keyword>
<keyword id="KW-0964">Secreted</keyword>
<keyword id="KW-0719">Serine esterase</keyword>
<keyword id="KW-0732">Signal</keyword>
<evidence type="ECO:0000250" key="1"/>
<evidence type="ECO:0000255" key="2"/>
<evidence type="ECO:0000255" key="3">
    <source>
        <dbReference type="PROSITE-ProRule" id="PRU00597"/>
    </source>
</evidence>
<evidence type="ECO:0000256" key="4">
    <source>
        <dbReference type="SAM" id="MobiDB-lite"/>
    </source>
</evidence>
<evidence type="ECO:0000305" key="5"/>